<proteinExistence type="inferred from homology"/>
<comment type="function">
    <text evidence="1">Binds 23S rRNA and is also seen to make contacts with the A and possibly P site tRNAs.</text>
</comment>
<comment type="subunit">
    <text evidence="1">Part of the 50S ribosomal subunit.</text>
</comment>
<comment type="similarity">
    <text evidence="1">Belongs to the universal ribosomal protein uL16 family.</text>
</comment>
<reference key="1">
    <citation type="journal article" date="2009" name="J. Bacteriol.">
        <title>Complete genome sequence of Erythrobacter litoralis HTCC2594.</title>
        <authorList>
            <person name="Oh H.M."/>
            <person name="Giovannoni S.J."/>
            <person name="Ferriera S."/>
            <person name="Johnson J."/>
            <person name="Cho J.C."/>
        </authorList>
    </citation>
    <scope>NUCLEOTIDE SEQUENCE [LARGE SCALE GENOMIC DNA]</scope>
    <source>
        <strain>HTCC2594</strain>
    </source>
</reference>
<sequence length="144" mass="15895">MLQPKKTKYRKAFKGRIKGDAKGGTTLNFGSYGLKALEPERVTARQIEAARRAITRHIKRQGRLWIRVFPDVPVSKKPAEVRQGKGKGSVEYWAARVKPGRILFELDGVPGPLAASAFERAAMKLPVKTKVVARFGDTSHLGGN</sequence>
<protein>
    <recommendedName>
        <fullName evidence="1">Large ribosomal subunit protein uL16</fullName>
    </recommendedName>
    <alternativeName>
        <fullName evidence="2">50S ribosomal protein L16</fullName>
    </alternativeName>
</protein>
<dbReference type="EMBL" id="CP000157">
    <property type="protein sequence ID" value="ABC63723.1"/>
    <property type="molecule type" value="Genomic_DNA"/>
</dbReference>
<dbReference type="RefSeq" id="WP_011414555.1">
    <property type="nucleotide sequence ID" value="NC_007722.1"/>
</dbReference>
<dbReference type="SMR" id="Q2N9B8"/>
<dbReference type="STRING" id="314225.ELI_08155"/>
<dbReference type="KEGG" id="eli:ELI_08155"/>
<dbReference type="eggNOG" id="COG0197">
    <property type="taxonomic scope" value="Bacteria"/>
</dbReference>
<dbReference type="HOGENOM" id="CLU_078858_2_1_5"/>
<dbReference type="OrthoDB" id="9802589at2"/>
<dbReference type="Proteomes" id="UP000008808">
    <property type="component" value="Chromosome"/>
</dbReference>
<dbReference type="GO" id="GO:0022625">
    <property type="term" value="C:cytosolic large ribosomal subunit"/>
    <property type="evidence" value="ECO:0007669"/>
    <property type="project" value="TreeGrafter"/>
</dbReference>
<dbReference type="GO" id="GO:0019843">
    <property type="term" value="F:rRNA binding"/>
    <property type="evidence" value="ECO:0007669"/>
    <property type="project" value="UniProtKB-UniRule"/>
</dbReference>
<dbReference type="GO" id="GO:0003735">
    <property type="term" value="F:structural constituent of ribosome"/>
    <property type="evidence" value="ECO:0007669"/>
    <property type="project" value="InterPro"/>
</dbReference>
<dbReference type="GO" id="GO:0000049">
    <property type="term" value="F:tRNA binding"/>
    <property type="evidence" value="ECO:0007669"/>
    <property type="project" value="UniProtKB-KW"/>
</dbReference>
<dbReference type="GO" id="GO:0006412">
    <property type="term" value="P:translation"/>
    <property type="evidence" value="ECO:0007669"/>
    <property type="project" value="UniProtKB-UniRule"/>
</dbReference>
<dbReference type="CDD" id="cd01433">
    <property type="entry name" value="Ribosomal_L16_L10e"/>
    <property type="match status" value="1"/>
</dbReference>
<dbReference type="FunFam" id="3.90.1170.10:FF:000001">
    <property type="entry name" value="50S ribosomal protein L16"/>
    <property type="match status" value="1"/>
</dbReference>
<dbReference type="Gene3D" id="3.90.1170.10">
    <property type="entry name" value="Ribosomal protein L10e/L16"/>
    <property type="match status" value="1"/>
</dbReference>
<dbReference type="HAMAP" id="MF_01342">
    <property type="entry name" value="Ribosomal_uL16"/>
    <property type="match status" value="1"/>
</dbReference>
<dbReference type="InterPro" id="IPR047873">
    <property type="entry name" value="Ribosomal_uL16"/>
</dbReference>
<dbReference type="InterPro" id="IPR000114">
    <property type="entry name" value="Ribosomal_uL16_bact-type"/>
</dbReference>
<dbReference type="InterPro" id="IPR020798">
    <property type="entry name" value="Ribosomal_uL16_CS"/>
</dbReference>
<dbReference type="InterPro" id="IPR016180">
    <property type="entry name" value="Ribosomal_uL16_dom"/>
</dbReference>
<dbReference type="InterPro" id="IPR036920">
    <property type="entry name" value="Ribosomal_uL16_sf"/>
</dbReference>
<dbReference type="NCBIfam" id="TIGR01164">
    <property type="entry name" value="rplP_bact"/>
    <property type="match status" value="1"/>
</dbReference>
<dbReference type="PANTHER" id="PTHR12220">
    <property type="entry name" value="50S/60S RIBOSOMAL PROTEIN L16"/>
    <property type="match status" value="1"/>
</dbReference>
<dbReference type="PANTHER" id="PTHR12220:SF13">
    <property type="entry name" value="LARGE RIBOSOMAL SUBUNIT PROTEIN UL16M"/>
    <property type="match status" value="1"/>
</dbReference>
<dbReference type="Pfam" id="PF00252">
    <property type="entry name" value="Ribosomal_L16"/>
    <property type="match status" value="1"/>
</dbReference>
<dbReference type="PRINTS" id="PR00060">
    <property type="entry name" value="RIBOSOMALL16"/>
</dbReference>
<dbReference type="SUPFAM" id="SSF54686">
    <property type="entry name" value="Ribosomal protein L16p/L10e"/>
    <property type="match status" value="1"/>
</dbReference>
<dbReference type="PROSITE" id="PS00586">
    <property type="entry name" value="RIBOSOMAL_L16_1"/>
    <property type="match status" value="1"/>
</dbReference>
<gene>
    <name evidence="1" type="primary">rplP</name>
    <name type="ordered locus">ELI_08155</name>
</gene>
<evidence type="ECO:0000255" key="1">
    <source>
        <dbReference type="HAMAP-Rule" id="MF_01342"/>
    </source>
</evidence>
<evidence type="ECO:0000305" key="2"/>
<name>RL16_ERYLH</name>
<organism>
    <name type="scientific">Erythrobacter litoralis (strain HTCC2594)</name>
    <dbReference type="NCBI Taxonomy" id="314225"/>
    <lineage>
        <taxon>Bacteria</taxon>
        <taxon>Pseudomonadati</taxon>
        <taxon>Pseudomonadota</taxon>
        <taxon>Alphaproteobacteria</taxon>
        <taxon>Sphingomonadales</taxon>
        <taxon>Erythrobacteraceae</taxon>
        <taxon>Erythrobacter/Porphyrobacter group</taxon>
        <taxon>Erythrobacter</taxon>
    </lineage>
</organism>
<accession>Q2N9B8</accession>
<feature type="chain" id="PRO_1000054618" description="Large ribosomal subunit protein uL16">
    <location>
        <begin position="1"/>
        <end position="144"/>
    </location>
</feature>
<keyword id="KW-1185">Reference proteome</keyword>
<keyword id="KW-0687">Ribonucleoprotein</keyword>
<keyword id="KW-0689">Ribosomal protein</keyword>
<keyword id="KW-0694">RNA-binding</keyword>
<keyword id="KW-0699">rRNA-binding</keyword>
<keyword id="KW-0820">tRNA-binding</keyword>